<accession>O96651</accession>
<accession>Q5U0X6</accession>
<accession>Q9W416</accession>
<sequence length="875" mass="96973">MKSVLMVAEKPSLAASLAGILSNGRCTAKRGTGNGCSTHEWTGNFRNEGSVHFRMTSVCGHVMSLDFNKKYNCWDKVDPIQLFGCATEKKETNPKQNMRKFLAHEARGCDYLVLWLDCDKEGENICFEVMDAVKHVINNVYSDQVTYRAHFSAITEKDIKKAMETLGHPNENEAKSVDARQELDLRIGCAFTRFQTKFFQDRYGDLDSSLISYGPCQTPTLGFCVKRHDDIQTFKPESFWHLQLLAGQPEVTLEWARGRVFKKDIAIMLLNRVKEHKKATVESVASKEAYKSKPQALNTVELMRICSSGLGIGPFQAMQIAERLYTQGYISYPRTETNQYPTNFDLPAVLHVLKPSADFGEEARSILGDIQTPRKGKDAGDHPPITPMKLGNRSDFDRDTWRVYEFICRHFMGTVSRDLKYRVTTAKLSVGMETFSCTASVLIDAGFTKVMTWSAFGKDEPQPPFVQGTQVAINDVRLIESQTGPPDYLTESELITLMEEHGIGTDASIPVHINNICQRNYVHIENGRKLMPTTLGIVLVHGYQKIDPELVLPTMRTEVERMLTLIAQGSANFQDVLRHAIKIFKLKFMYFVKNIDSMDALFEVSFSPLAESGKAHSRCGKCRRYMKYIQTKPARLHCSHCDETYALPIGNVKVYREFKCPLDDFDLLAFSTGVKGRSYPFCPYCYNHPPFSDMPHLGGCNTCTNANCPHSLNTLGISSCVECPTGVLVLDCTLAPTWKLGCNRCDVIINCFKGATKITVEEAKCQECGAQQVNVVYKSDKSKFKDGSEEKSGCIFCSADFSHLVEKHRAVASRPVRSGGGFRGGKAGRGGGGMGGAAFGSGGAVTAGGGPNAGGGVRGSRVAKDKMGQLASYFV</sequence>
<feature type="chain" id="PRO_0000145196" description="DNA topoisomerase 3-beta">
    <location>
        <begin position="1"/>
        <end position="875"/>
    </location>
</feature>
<feature type="domain" description="Toprim" evidence="2">
    <location>
        <begin position="3"/>
        <end position="153"/>
    </location>
</feature>
<feature type="domain" description="Topo IA-type catalytic" evidence="3">
    <location>
        <begin position="170"/>
        <end position="589"/>
    </location>
</feature>
<feature type="region of interest" description="Disordered" evidence="5">
    <location>
        <begin position="371"/>
        <end position="391"/>
    </location>
</feature>
<feature type="active site" description="O-(5'-phospho-DNA)-tyrosine intermediate" evidence="3">
    <location>
        <position position="332"/>
    </location>
</feature>
<feature type="sequence conflict" description="In Ref. 1; AAD13219." evidence="7" ref="1">
    <original>V</original>
    <variation>M</variation>
    <location>
        <position position="747"/>
    </location>
</feature>
<organism>
    <name type="scientific">Drosophila melanogaster</name>
    <name type="common">Fruit fly</name>
    <dbReference type="NCBI Taxonomy" id="7227"/>
    <lineage>
        <taxon>Eukaryota</taxon>
        <taxon>Metazoa</taxon>
        <taxon>Ecdysozoa</taxon>
        <taxon>Arthropoda</taxon>
        <taxon>Hexapoda</taxon>
        <taxon>Insecta</taxon>
        <taxon>Pterygota</taxon>
        <taxon>Neoptera</taxon>
        <taxon>Endopterygota</taxon>
        <taxon>Diptera</taxon>
        <taxon>Brachycera</taxon>
        <taxon>Muscomorpha</taxon>
        <taxon>Ephydroidea</taxon>
        <taxon>Drosophilidae</taxon>
        <taxon>Drosophila</taxon>
        <taxon>Sophophora</taxon>
    </lineage>
</organism>
<dbReference type="EC" id="5.6.2.1" evidence="4"/>
<dbReference type="EMBL" id="AF099909">
    <property type="protein sequence ID" value="AAD13219.1"/>
    <property type="molecule type" value="mRNA"/>
</dbReference>
<dbReference type="EMBL" id="AE014298">
    <property type="protein sequence ID" value="AAF46144.1"/>
    <property type="molecule type" value="Genomic_DNA"/>
</dbReference>
<dbReference type="EMBL" id="BT016116">
    <property type="protein sequence ID" value="AAV37001.1"/>
    <property type="molecule type" value="mRNA"/>
</dbReference>
<dbReference type="RefSeq" id="NP_001284938.1">
    <property type="nucleotide sequence ID" value="NM_001298009.1"/>
</dbReference>
<dbReference type="RefSeq" id="NP_511059.2">
    <property type="nucleotide sequence ID" value="NM_078504.4"/>
</dbReference>
<dbReference type="SMR" id="O96651"/>
<dbReference type="BioGRID" id="58054">
    <property type="interactions" value="4"/>
</dbReference>
<dbReference type="DIP" id="DIP-22155N"/>
<dbReference type="FunCoup" id="O96651">
    <property type="interactions" value="2219"/>
</dbReference>
<dbReference type="IntAct" id="O96651">
    <property type="interactions" value="10"/>
</dbReference>
<dbReference type="MINT" id="O96651"/>
<dbReference type="STRING" id="7227.FBpp0309042"/>
<dbReference type="GlyGen" id="O96651">
    <property type="glycosylation" value="1 site"/>
</dbReference>
<dbReference type="PaxDb" id="7227-FBpp0070891"/>
<dbReference type="EnsemblMetazoa" id="FBtr0070930">
    <property type="protein sequence ID" value="FBpp0070891"/>
    <property type="gene ID" value="FBgn0026015"/>
</dbReference>
<dbReference type="EnsemblMetazoa" id="FBtr0340028">
    <property type="protein sequence ID" value="FBpp0309042"/>
    <property type="gene ID" value="FBgn0026015"/>
</dbReference>
<dbReference type="GeneID" id="31565"/>
<dbReference type="KEGG" id="dme:Dmel_CG3458"/>
<dbReference type="AGR" id="FB:FBgn0026015"/>
<dbReference type="CTD" id="31565"/>
<dbReference type="FlyBase" id="FBgn0026015">
    <property type="gene designation" value="Top3beta"/>
</dbReference>
<dbReference type="VEuPathDB" id="VectorBase:FBgn0026015"/>
<dbReference type="eggNOG" id="KOG1957">
    <property type="taxonomic scope" value="Eukaryota"/>
</dbReference>
<dbReference type="HOGENOM" id="CLU_002929_1_0_1"/>
<dbReference type="InParanoid" id="O96651"/>
<dbReference type="OMA" id="VIHNVYS"/>
<dbReference type="OrthoDB" id="430051at2759"/>
<dbReference type="PhylomeDB" id="O96651"/>
<dbReference type="BioGRID-ORCS" id="31565">
    <property type="hits" value="0 hits in 1 CRISPR screen"/>
</dbReference>
<dbReference type="GenomeRNAi" id="31565"/>
<dbReference type="PRO" id="PR:O96651"/>
<dbReference type="Proteomes" id="UP000000803">
    <property type="component" value="Chromosome X"/>
</dbReference>
<dbReference type="Bgee" id="FBgn0026015">
    <property type="expression patterns" value="Expressed in T neuron T5d (Drosophila) in embryonic/larval optic lobe (Drosophila) and 126 other cell types or tissues"/>
</dbReference>
<dbReference type="ExpressionAtlas" id="O96651">
    <property type="expression patterns" value="baseline and differential"/>
</dbReference>
<dbReference type="GO" id="GO:0140225">
    <property type="term" value="C:DNA topoisomerase III-beta-TDRD3 complex"/>
    <property type="evidence" value="ECO:0000314"/>
    <property type="project" value="FlyBase"/>
</dbReference>
<dbReference type="GO" id="GO:0005634">
    <property type="term" value="C:nucleus"/>
    <property type="evidence" value="ECO:0000318"/>
    <property type="project" value="GO_Central"/>
</dbReference>
<dbReference type="GO" id="GO:0003677">
    <property type="term" value="F:DNA binding"/>
    <property type="evidence" value="ECO:0007669"/>
    <property type="project" value="UniProtKB-KW"/>
</dbReference>
<dbReference type="GO" id="GO:0003917">
    <property type="term" value="F:DNA topoisomerase type I (single strand cut, ATP-independent) activity"/>
    <property type="evidence" value="ECO:0000314"/>
    <property type="project" value="FlyBase"/>
</dbReference>
<dbReference type="GO" id="GO:0140226">
    <property type="term" value="F:RNA topoisomerase activity"/>
    <property type="evidence" value="ECO:0000314"/>
    <property type="project" value="FlyBase"/>
</dbReference>
<dbReference type="GO" id="GO:0006310">
    <property type="term" value="P:DNA recombination"/>
    <property type="evidence" value="ECO:0000318"/>
    <property type="project" value="GO_Central"/>
</dbReference>
<dbReference type="GO" id="GO:0006281">
    <property type="term" value="P:DNA repair"/>
    <property type="evidence" value="ECO:0000318"/>
    <property type="project" value="GO_Central"/>
</dbReference>
<dbReference type="GO" id="GO:0006265">
    <property type="term" value="P:DNA topological change"/>
    <property type="evidence" value="ECO:0000314"/>
    <property type="project" value="FlyBase"/>
</dbReference>
<dbReference type="GO" id="GO:0045727">
    <property type="term" value="P:positive regulation of translation"/>
    <property type="evidence" value="ECO:0000315"/>
    <property type="project" value="FlyBase"/>
</dbReference>
<dbReference type="GO" id="GO:0141194">
    <property type="term" value="P:siRNA-mediated heterochromatin formation"/>
    <property type="evidence" value="ECO:0000316"/>
    <property type="project" value="FlyBase"/>
</dbReference>
<dbReference type="CDD" id="cd00186">
    <property type="entry name" value="TOP1Ac"/>
    <property type="match status" value="1"/>
</dbReference>
<dbReference type="CDD" id="cd03362">
    <property type="entry name" value="TOPRIM_TopoIA_TopoIII"/>
    <property type="match status" value="1"/>
</dbReference>
<dbReference type="FunFam" id="1.10.290.10:FF:000001">
    <property type="entry name" value="DNA topoisomerase"/>
    <property type="match status" value="1"/>
</dbReference>
<dbReference type="FunFam" id="3.40.50.140:FF:000002">
    <property type="entry name" value="DNA topoisomerase"/>
    <property type="match status" value="1"/>
</dbReference>
<dbReference type="Gene3D" id="3.40.50.140">
    <property type="match status" value="1"/>
</dbReference>
<dbReference type="Gene3D" id="1.10.460.10">
    <property type="entry name" value="Topoisomerase I, domain 2"/>
    <property type="match status" value="1"/>
</dbReference>
<dbReference type="Gene3D" id="2.70.20.10">
    <property type="entry name" value="Topoisomerase I, domain 3"/>
    <property type="match status" value="1"/>
</dbReference>
<dbReference type="Gene3D" id="1.10.290.10">
    <property type="entry name" value="Topoisomerase I, domain 4"/>
    <property type="match status" value="1"/>
</dbReference>
<dbReference type="InterPro" id="IPR000380">
    <property type="entry name" value="Topo_IA"/>
</dbReference>
<dbReference type="InterPro" id="IPR003601">
    <property type="entry name" value="Topo_IA_2"/>
</dbReference>
<dbReference type="InterPro" id="IPR023406">
    <property type="entry name" value="Topo_IA_AS"/>
</dbReference>
<dbReference type="InterPro" id="IPR013497">
    <property type="entry name" value="Topo_IA_cen"/>
</dbReference>
<dbReference type="InterPro" id="IPR013824">
    <property type="entry name" value="Topo_IA_cen_sub1"/>
</dbReference>
<dbReference type="InterPro" id="IPR013825">
    <property type="entry name" value="Topo_IA_cen_sub2"/>
</dbReference>
<dbReference type="InterPro" id="IPR013826">
    <property type="entry name" value="Topo_IA_cen_sub3"/>
</dbReference>
<dbReference type="InterPro" id="IPR023405">
    <property type="entry name" value="Topo_IA_core_domain"/>
</dbReference>
<dbReference type="InterPro" id="IPR003602">
    <property type="entry name" value="Topo_IA_DNA-bd_dom"/>
</dbReference>
<dbReference type="InterPro" id="IPR006171">
    <property type="entry name" value="TOPRIM_dom"/>
</dbReference>
<dbReference type="InterPro" id="IPR034144">
    <property type="entry name" value="TOPRIM_TopoIII"/>
</dbReference>
<dbReference type="InterPro" id="IPR056452">
    <property type="entry name" value="Zn_ribbon_TOP3B"/>
</dbReference>
<dbReference type="PANTHER" id="PTHR11390:SF20">
    <property type="entry name" value="DNA TOPOISOMERASE 3-BETA-1"/>
    <property type="match status" value="1"/>
</dbReference>
<dbReference type="PANTHER" id="PTHR11390">
    <property type="entry name" value="PROKARYOTIC DNA TOPOISOMERASE"/>
    <property type="match status" value="1"/>
</dbReference>
<dbReference type="Pfam" id="PF01131">
    <property type="entry name" value="Topoisom_bac"/>
    <property type="match status" value="1"/>
</dbReference>
<dbReference type="Pfam" id="PF01751">
    <property type="entry name" value="Toprim"/>
    <property type="match status" value="1"/>
</dbReference>
<dbReference type="Pfam" id="PF23546">
    <property type="entry name" value="Zn_ribbon_TOP3B"/>
    <property type="match status" value="1"/>
</dbReference>
<dbReference type="PRINTS" id="PR00417">
    <property type="entry name" value="PRTPISMRASEI"/>
</dbReference>
<dbReference type="SMART" id="SM00437">
    <property type="entry name" value="TOP1Ac"/>
    <property type="match status" value="1"/>
</dbReference>
<dbReference type="SMART" id="SM00436">
    <property type="entry name" value="TOP1Bc"/>
    <property type="match status" value="1"/>
</dbReference>
<dbReference type="SMART" id="SM00493">
    <property type="entry name" value="TOPRIM"/>
    <property type="match status" value="1"/>
</dbReference>
<dbReference type="SUPFAM" id="SSF56712">
    <property type="entry name" value="Prokaryotic type I DNA topoisomerase"/>
    <property type="match status" value="1"/>
</dbReference>
<dbReference type="PROSITE" id="PS00396">
    <property type="entry name" value="TOPO_IA_1"/>
    <property type="match status" value="1"/>
</dbReference>
<dbReference type="PROSITE" id="PS52039">
    <property type="entry name" value="TOPO_IA_2"/>
    <property type="match status" value="1"/>
</dbReference>
<dbReference type="PROSITE" id="PS50880">
    <property type="entry name" value="TOPRIM"/>
    <property type="match status" value="1"/>
</dbReference>
<evidence type="ECO:0000250" key="1"/>
<evidence type="ECO:0000255" key="2">
    <source>
        <dbReference type="PROSITE-ProRule" id="PRU00995"/>
    </source>
</evidence>
<evidence type="ECO:0000255" key="3">
    <source>
        <dbReference type="PROSITE-ProRule" id="PRU01383"/>
    </source>
</evidence>
<evidence type="ECO:0000255" key="4">
    <source>
        <dbReference type="PROSITE-ProRule" id="PRU10131"/>
    </source>
</evidence>
<evidence type="ECO:0000256" key="5">
    <source>
        <dbReference type="SAM" id="MobiDB-lite"/>
    </source>
</evidence>
<evidence type="ECO:0000269" key="6">
    <source>
    </source>
</evidence>
<evidence type="ECO:0000305" key="7"/>
<gene>
    <name type="primary">Top3beta</name>
    <name type="synonym">TOP3</name>
    <name type="ORF">CG3458</name>
</gene>
<comment type="function">
    <text evidence="1 6">Releases the supercoiling and torsional tension of DNA introduced during the DNA replication and transcription by transiently cleaving and rejoining one strand of the DNA duplex. Introduces a single-strand break via transesterification at a target site in duplex DNA. The scissile phosphodiester is attacked by the catalytic tyrosine of the enzyme, resulting in the formation of a DNA-(5'-phosphotyrosyl)-enzyme intermediate and the expulsion of a 3'-OH DNA strand. The free DNA strand than undergoes passage around the unbroken strand thus removing DNA supercoils. Finally, in the religation step, the DNA 3'-OH attacks the covalent intermediate to expel the active-site tyrosine and restore the DNA phosphodiester backbone (By similarity). Weakly relaxes negative supercoils and displays a distinct preference for binding single-stranded DNA.</text>
</comment>
<comment type="catalytic activity">
    <reaction evidence="4">
        <text>ATP-independent breakage of single-stranded DNA, followed by passage and rejoining.</text>
        <dbReference type="EC" id="5.6.2.1"/>
    </reaction>
</comment>
<comment type="developmental stage">
    <text evidence="6">Expressed during the first 6 hours of embryonic development, levels decline during larval and pupal stages to increase again during adulthood.</text>
</comment>
<comment type="similarity">
    <text evidence="3 7">Belongs to the type IA topoisomerase family.</text>
</comment>
<reference key="1">
    <citation type="journal article" date="2000" name="J. Biol. Chem.">
        <title>Cloning and characterization of Drosophila topoisomerase IIIbeta. Relaxation of hypernegatively supercoiled DNA.</title>
        <authorList>
            <person name="Wilson T.M."/>
            <person name="Chen A.D."/>
            <person name="Hsieh T.-S."/>
        </authorList>
    </citation>
    <scope>NUCLEOTIDE SEQUENCE [MRNA]</scope>
    <scope>FUNCTION</scope>
    <scope>DEVELOPMENTAL STAGE</scope>
    <source>
        <tissue>Embryo</tissue>
    </source>
</reference>
<reference key="2">
    <citation type="journal article" date="2000" name="Science">
        <title>The genome sequence of Drosophila melanogaster.</title>
        <authorList>
            <person name="Adams M.D."/>
            <person name="Celniker S.E."/>
            <person name="Holt R.A."/>
            <person name="Evans C.A."/>
            <person name="Gocayne J.D."/>
            <person name="Amanatides P.G."/>
            <person name="Scherer S.E."/>
            <person name="Li P.W."/>
            <person name="Hoskins R.A."/>
            <person name="Galle R.F."/>
            <person name="George R.A."/>
            <person name="Lewis S.E."/>
            <person name="Richards S."/>
            <person name="Ashburner M."/>
            <person name="Henderson S.N."/>
            <person name="Sutton G.G."/>
            <person name="Wortman J.R."/>
            <person name="Yandell M.D."/>
            <person name="Zhang Q."/>
            <person name="Chen L.X."/>
            <person name="Brandon R.C."/>
            <person name="Rogers Y.-H.C."/>
            <person name="Blazej R.G."/>
            <person name="Champe M."/>
            <person name="Pfeiffer B.D."/>
            <person name="Wan K.H."/>
            <person name="Doyle C."/>
            <person name="Baxter E.G."/>
            <person name="Helt G."/>
            <person name="Nelson C.R."/>
            <person name="Miklos G.L.G."/>
            <person name="Abril J.F."/>
            <person name="Agbayani A."/>
            <person name="An H.-J."/>
            <person name="Andrews-Pfannkoch C."/>
            <person name="Baldwin D."/>
            <person name="Ballew R.M."/>
            <person name="Basu A."/>
            <person name="Baxendale J."/>
            <person name="Bayraktaroglu L."/>
            <person name="Beasley E.M."/>
            <person name="Beeson K.Y."/>
            <person name="Benos P.V."/>
            <person name="Berman B.P."/>
            <person name="Bhandari D."/>
            <person name="Bolshakov S."/>
            <person name="Borkova D."/>
            <person name="Botchan M.R."/>
            <person name="Bouck J."/>
            <person name="Brokstein P."/>
            <person name="Brottier P."/>
            <person name="Burtis K.C."/>
            <person name="Busam D.A."/>
            <person name="Butler H."/>
            <person name="Cadieu E."/>
            <person name="Center A."/>
            <person name="Chandra I."/>
            <person name="Cherry J.M."/>
            <person name="Cawley S."/>
            <person name="Dahlke C."/>
            <person name="Davenport L.B."/>
            <person name="Davies P."/>
            <person name="de Pablos B."/>
            <person name="Delcher A."/>
            <person name="Deng Z."/>
            <person name="Mays A.D."/>
            <person name="Dew I."/>
            <person name="Dietz S.M."/>
            <person name="Dodson K."/>
            <person name="Doup L.E."/>
            <person name="Downes M."/>
            <person name="Dugan-Rocha S."/>
            <person name="Dunkov B.C."/>
            <person name="Dunn P."/>
            <person name="Durbin K.J."/>
            <person name="Evangelista C.C."/>
            <person name="Ferraz C."/>
            <person name="Ferriera S."/>
            <person name="Fleischmann W."/>
            <person name="Fosler C."/>
            <person name="Gabrielian A.E."/>
            <person name="Garg N.S."/>
            <person name="Gelbart W.M."/>
            <person name="Glasser K."/>
            <person name="Glodek A."/>
            <person name="Gong F."/>
            <person name="Gorrell J.H."/>
            <person name="Gu Z."/>
            <person name="Guan P."/>
            <person name="Harris M."/>
            <person name="Harris N.L."/>
            <person name="Harvey D.A."/>
            <person name="Heiman T.J."/>
            <person name="Hernandez J.R."/>
            <person name="Houck J."/>
            <person name="Hostin D."/>
            <person name="Houston K.A."/>
            <person name="Howland T.J."/>
            <person name="Wei M.-H."/>
            <person name="Ibegwam C."/>
            <person name="Jalali M."/>
            <person name="Kalush F."/>
            <person name="Karpen G.H."/>
            <person name="Ke Z."/>
            <person name="Kennison J.A."/>
            <person name="Ketchum K.A."/>
            <person name="Kimmel B.E."/>
            <person name="Kodira C.D."/>
            <person name="Kraft C.L."/>
            <person name="Kravitz S."/>
            <person name="Kulp D."/>
            <person name="Lai Z."/>
            <person name="Lasko P."/>
            <person name="Lei Y."/>
            <person name="Levitsky A.A."/>
            <person name="Li J.H."/>
            <person name="Li Z."/>
            <person name="Liang Y."/>
            <person name="Lin X."/>
            <person name="Liu X."/>
            <person name="Mattei B."/>
            <person name="McIntosh T.C."/>
            <person name="McLeod M.P."/>
            <person name="McPherson D."/>
            <person name="Merkulov G."/>
            <person name="Milshina N.V."/>
            <person name="Mobarry C."/>
            <person name="Morris J."/>
            <person name="Moshrefi A."/>
            <person name="Mount S.M."/>
            <person name="Moy M."/>
            <person name="Murphy B."/>
            <person name="Murphy L."/>
            <person name="Muzny D.M."/>
            <person name="Nelson D.L."/>
            <person name="Nelson D.R."/>
            <person name="Nelson K.A."/>
            <person name="Nixon K."/>
            <person name="Nusskern D.R."/>
            <person name="Pacleb J.M."/>
            <person name="Palazzolo M."/>
            <person name="Pittman G.S."/>
            <person name="Pan S."/>
            <person name="Pollard J."/>
            <person name="Puri V."/>
            <person name="Reese M.G."/>
            <person name="Reinert K."/>
            <person name="Remington K."/>
            <person name="Saunders R.D.C."/>
            <person name="Scheeler F."/>
            <person name="Shen H."/>
            <person name="Shue B.C."/>
            <person name="Siden-Kiamos I."/>
            <person name="Simpson M."/>
            <person name="Skupski M.P."/>
            <person name="Smith T.J."/>
            <person name="Spier E."/>
            <person name="Spradling A.C."/>
            <person name="Stapleton M."/>
            <person name="Strong R."/>
            <person name="Sun E."/>
            <person name="Svirskas R."/>
            <person name="Tector C."/>
            <person name="Turner R."/>
            <person name="Venter E."/>
            <person name="Wang A.H."/>
            <person name="Wang X."/>
            <person name="Wang Z.-Y."/>
            <person name="Wassarman D.A."/>
            <person name="Weinstock G.M."/>
            <person name="Weissenbach J."/>
            <person name="Williams S.M."/>
            <person name="Woodage T."/>
            <person name="Worley K.C."/>
            <person name="Wu D."/>
            <person name="Yang S."/>
            <person name="Yao Q.A."/>
            <person name="Ye J."/>
            <person name="Yeh R.-F."/>
            <person name="Zaveri J.S."/>
            <person name="Zhan M."/>
            <person name="Zhang G."/>
            <person name="Zhao Q."/>
            <person name="Zheng L."/>
            <person name="Zheng X.H."/>
            <person name="Zhong F.N."/>
            <person name="Zhong W."/>
            <person name="Zhou X."/>
            <person name="Zhu S.C."/>
            <person name="Zhu X."/>
            <person name="Smith H.O."/>
            <person name="Gibbs R.A."/>
            <person name="Myers E.W."/>
            <person name="Rubin G.M."/>
            <person name="Venter J.C."/>
        </authorList>
    </citation>
    <scope>NUCLEOTIDE SEQUENCE [LARGE SCALE GENOMIC DNA]</scope>
    <source>
        <strain>Berkeley</strain>
    </source>
</reference>
<reference key="3">
    <citation type="journal article" date="2002" name="Genome Biol.">
        <title>Annotation of the Drosophila melanogaster euchromatic genome: a systematic review.</title>
        <authorList>
            <person name="Misra S."/>
            <person name="Crosby M.A."/>
            <person name="Mungall C.J."/>
            <person name="Matthews B.B."/>
            <person name="Campbell K.S."/>
            <person name="Hradecky P."/>
            <person name="Huang Y."/>
            <person name="Kaminker J.S."/>
            <person name="Millburn G.H."/>
            <person name="Prochnik S.E."/>
            <person name="Smith C.D."/>
            <person name="Tupy J.L."/>
            <person name="Whitfield E.J."/>
            <person name="Bayraktaroglu L."/>
            <person name="Berman B.P."/>
            <person name="Bettencourt B.R."/>
            <person name="Celniker S.E."/>
            <person name="de Grey A.D.N.J."/>
            <person name="Drysdale R.A."/>
            <person name="Harris N.L."/>
            <person name="Richter J."/>
            <person name="Russo S."/>
            <person name="Schroeder A.J."/>
            <person name="Shu S.Q."/>
            <person name="Stapleton M."/>
            <person name="Yamada C."/>
            <person name="Ashburner M."/>
            <person name="Gelbart W.M."/>
            <person name="Rubin G.M."/>
            <person name="Lewis S.E."/>
        </authorList>
    </citation>
    <scope>GENOME REANNOTATION</scope>
    <source>
        <strain>Berkeley</strain>
    </source>
</reference>
<reference key="4">
    <citation type="submission" date="2004-10" db="EMBL/GenBank/DDBJ databases">
        <authorList>
            <person name="Stapleton M."/>
            <person name="Carlson J.W."/>
            <person name="Chavez C."/>
            <person name="Frise E."/>
            <person name="George R.A."/>
            <person name="Pacleb J.M."/>
            <person name="Park S."/>
            <person name="Wan K.H."/>
            <person name="Yu C."/>
            <person name="Rubin G.M."/>
            <person name="Celniker S.E."/>
        </authorList>
    </citation>
    <scope>NUCLEOTIDE SEQUENCE [LARGE SCALE MRNA]</scope>
    <source>
        <strain>Berkeley</strain>
        <tissue>Embryo</tissue>
    </source>
</reference>
<proteinExistence type="evidence at transcript level"/>
<keyword id="KW-0238">DNA-binding</keyword>
<keyword id="KW-0413">Isomerase</keyword>
<keyword id="KW-1185">Reference proteome</keyword>
<keyword id="KW-0799">Topoisomerase</keyword>
<name>TOP3B_DROME</name>
<protein>
    <recommendedName>
        <fullName>DNA topoisomerase 3-beta</fullName>
        <ecNumber evidence="4">5.6.2.1</ecNumber>
    </recommendedName>
    <alternativeName>
        <fullName>DNA topoisomerase III beta</fullName>
    </alternativeName>
</protein>